<reference key="1">
    <citation type="submission" date="2007-10" db="EMBL/GenBank/DDBJ databases">
        <title>Complete sequence of Methanococcus maripaludis C6.</title>
        <authorList>
            <consortium name="US DOE Joint Genome Institute"/>
            <person name="Copeland A."/>
            <person name="Lucas S."/>
            <person name="Lapidus A."/>
            <person name="Barry K."/>
            <person name="Glavina del Rio T."/>
            <person name="Dalin E."/>
            <person name="Tice H."/>
            <person name="Pitluck S."/>
            <person name="Clum A."/>
            <person name="Schmutz J."/>
            <person name="Larimer F."/>
            <person name="Land M."/>
            <person name="Hauser L."/>
            <person name="Kyrpides N."/>
            <person name="Mikhailova N."/>
            <person name="Sieprawska-Lupa M."/>
            <person name="Whitman W.B."/>
            <person name="Richardson P."/>
        </authorList>
    </citation>
    <scope>NUCLEOTIDE SEQUENCE [LARGE SCALE GENOMIC DNA]</scope>
    <source>
        <strain>C6 / ATCC BAA-1332</strain>
    </source>
</reference>
<organism>
    <name type="scientific">Methanococcus maripaludis (strain C6 / ATCC BAA-1332)</name>
    <dbReference type="NCBI Taxonomy" id="444158"/>
    <lineage>
        <taxon>Archaea</taxon>
        <taxon>Methanobacteriati</taxon>
        <taxon>Methanobacteriota</taxon>
        <taxon>Methanomada group</taxon>
        <taxon>Methanococci</taxon>
        <taxon>Methanococcales</taxon>
        <taxon>Methanococcaceae</taxon>
        <taxon>Methanococcus</taxon>
    </lineage>
</organism>
<sequence length="113" mass="12049">MGNYHVTLQASYIAKNVEDVEDAIGVAISQIGKLLNKGSLDYVDIDVGLTICPKCGEPIDCVLVVAKTAIVGILLSMKVFNAESPEHAVRIAKSSIGRALKDIPLEDVDVVEI</sequence>
<gene>
    <name type="ordered locus">MmarC6_1165</name>
</gene>
<feature type="chain" id="PRO_1000139236" description="UPF0212 protein MmarC6_1165">
    <location>
        <begin position="1"/>
        <end position="113"/>
    </location>
</feature>
<proteinExistence type="inferred from homology"/>
<comment type="similarity">
    <text evidence="1">Belongs to the UPF0212 family.</text>
</comment>
<dbReference type="EMBL" id="CP000867">
    <property type="protein sequence ID" value="ABX01978.1"/>
    <property type="molecule type" value="Genomic_DNA"/>
</dbReference>
<dbReference type="STRING" id="444158.MmarC6_1165"/>
<dbReference type="KEGG" id="mmx:MmarC6_1165"/>
<dbReference type="eggNOG" id="arCOG02119">
    <property type="taxonomic scope" value="Archaea"/>
</dbReference>
<dbReference type="HOGENOM" id="CLU_138334_0_0_2"/>
<dbReference type="OrthoDB" id="63517at2157"/>
<dbReference type="PhylomeDB" id="A9A9F5"/>
<dbReference type="HAMAP" id="MF_01223">
    <property type="entry name" value="UPF0212"/>
    <property type="match status" value="1"/>
</dbReference>
<dbReference type="InterPro" id="IPR007564">
    <property type="entry name" value="UPF0212"/>
</dbReference>
<dbReference type="NCBIfam" id="NF003035">
    <property type="entry name" value="PRK03922.1"/>
    <property type="match status" value="1"/>
</dbReference>
<dbReference type="PANTHER" id="PTHR42199">
    <property type="entry name" value="UPF0212 PROTEIN MJ0068"/>
    <property type="match status" value="1"/>
</dbReference>
<dbReference type="PANTHER" id="PTHR42199:SF1">
    <property type="entry name" value="UPF0212 PROTEIN TK1194"/>
    <property type="match status" value="1"/>
</dbReference>
<dbReference type="Pfam" id="PF04475">
    <property type="entry name" value="DUF555"/>
    <property type="match status" value="1"/>
</dbReference>
<dbReference type="PIRSF" id="PIRSF016934">
    <property type="entry name" value="UCP016934"/>
    <property type="match status" value="1"/>
</dbReference>
<accession>A9A9F5</accession>
<protein>
    <recommendedName>
        <fullName evidence="1">UPF0212 protein MmarC6_1165</fullName>
    </recommendedName>
</protein>
<name>Y1165_METM6</name>
<evidence type="ECO:0000255" key="1">
    <source>
        <dbReference type="HAMAP-Rule" id="MF_01223"/>
    </source>
</evidence>